<organism>
    <name type="scientific">Aspergillus oryzae (strain ATCC 42149 / RIB 40)</name>
    <name type="common">Yellow koji mold</name>
    <dbReference type="NCBI Taxonomy" id="510516"/>
    <lineage>
        <taxon>Eukaryota</taxon>
        <taxon>Fungi</taxon>
        <taxon>Dikarya</taxon>
        <taxon>Ascomycota</taxon>
        <taxon>Pezizomycotina</taxon>
        <taxon>Eurotiomycetes</taxon>
        <taxon>Eurotiomycetidae</taxon>
        <taxon>Eurotiales</taxon>
        <taxon>Aspergillaceae</taxon>
        <taxon>Aspergillus</taxon>
        <taxon>Aspergillus subgen. Circumdati</taxon>
    </lineage>
</organism>
<reference key="1">
    <citation type="journal article" date="2005" name="Nature">
        <title>Genome sequencing and analysis of Aspergillus oryzae.</title>
        <authorList>
            <person name="Machida M."/>
            <person name="Asai K."/>
            <person name="Sano M."/>
            <person name="Tanaka T."/>
            <person name="Kumagai T."/>
            <person name="Terai G."/>
            <person name="Kusumoto K."/>
            <person name="Arima T."/>
            <person name="Akita O."/>
            <person name="Kashiwagi Y."/>
            <person name="Abe K."/>
            <person name="Gomi K."/>
            <person name="Horiuchi H."/>
            <person name="Kitamoto K."/>
            <person name="Kobayashi T."/>
            <person name="Takeuchi M."/>
            <person name="Denning D.W."/>
            <person name="Galagan J.E."/>
            <person name="Nierman W.C."/>
            <person name="Yu J."/>
            <person name="Archer D.B."/>
            <person name="Bennett J.W."/>
            <person name="Bhatnagar D."/>
            <person name="Cleveland T.E."/>
            <person name="Fedorova N.D."/>
            <person name="Gotoh O."/>
            <person name="Horikawa H."/>
            <person name="Hosoyama A."/>
            <person name="Ichinomiya M."/>
            <person name="Igarashi R."/>
            <person name="Iwashita K."/>
            <person name="Juvvadi P.R."/>
            <person name="Kato M."/>
            <person name="Kato Y."/>
            <person name="Kin T."/>
            <person name="Kokubun A."/>
            <person name="Maeda H."/>
            <person name="Maeyama N."/>
            <person name="Maruyama J."/>
            <person name="Nagasaki H."/>
            <person name="Nakajima T."/>
            <person name="Oda K."/>
            <person name="Okada K."/>
            <person name="Paulsen I."/>
            <person name="Sakamoto K."/>
            <person name="Sawano T."/>
            <person name="Takahashi M."/>
            <person name="Takase K."/>
            <person name="Terabayashi Y."/>
            <person name="Wortman J.R."/>
            <person name="Yamada O."/>
            <person name="Yamagata Y."/>
            <person name="Anazawa H."/>
            <person name="Hata Y."/>
            <person name="Koide Y."/>
            <person name="Komori T."/>
            <person name="Koyama Y."/>
            <person name="Minetoki T."/>
            <person name="Suharnan S."/>
            <person name="Tanaka A."/>
            <person name="Isono K."/>
            <person name="Kuhara S."/>
            <person name="Ogasawara N."/>
            <person name="Kikuchi H."/>
        </authorList>
    </citation>
    <scope>NUCLEOTIDE SEQUENCE [LARGE SCALE GENOMIC DNA]</scope>
    <source>
        <strain>ATCC 42149 / RIB 40</strain>
    </source>
</reference>
<protein>
    <recommendedName>
        <fullName>DNA mismatch repair protein msh3</fullName>
    </recommendedName>
    <alternativeName>
        <fullName>MutS protein homolog 3</fullName>
    </alternativeName>
</protein>
<evidence type="ECO:0000250" key="1"/>
<evidence type="ECO:0000255" key="2"/>
<evidence type="ECO:0000256" key="3">
    <source>
        <dbReference type="SAM" id="MobiDB-lite"/>
    </source>
</evidence>
<evidence type="ECO:0000305" key="4"/>
<sequence>MPLSSQPSSSNLKRKQPTISSFFTKKPQLSQESISNDVLEKEERDEEREEVAKQEEGLRENGGTRSNNVDDDEDDVVAPASKRARTNGSHSQNTIETPKEKHVERPLPSDSIQKTELSKFASSPATEGETKERTKERERLHQKFVRRLGGPDCLIGIGRNTAPEAVPEEVGEGDEDDEPSPPPAAKGKATAKKGARKLTPMEKQVIDIKRKHMDTVLVVEVGYKFRFFGEDARTAAKELNIVCIPGKFRFDEHPSEAHLDRFASASIPVHRLHVHVKRLVSAGHKVGVVRQMETAALKAAGDNRNAPFGRKLTNLYTKGTYIDDMEGLEGSTASMSATGTSMATGYMLCITETNTKGWGNDEKVLVGIVAVQPATGDIVYDEFEDGFMRSEIETRLLHLAPCEVLIVGDLSKATEKLVQHLSGNKTNAFGDEIRVERAPKAKTAAAESHSHVSSFYAERMKKVNATNDVQASSLLQKVLNLSEQATICLSSMIKHMSEYGLEHVFQLTKYFQHFSSRSHMLLNANTLNSLEIYHNQTDHSTKGSLFWTLDRTQTRFGQRMLRKWVGRPLLNKLGLEERVDAVEELKNLERVALVEQMKCLLGRIKTDLEKSLIRVYYGKCTRPELLTLLQTLQMIAQEFAGVQSPADTGFSSPLISKAVASLPTILEDVVRFLDKINMHAAKNDDKYEFFRESEETDEITEHKLGIGAVEHDLEEHRSTAGEILGKRKVDYVTVAGIEYLIAVENKSPSIKKVPASWVKISGTKAVSRFHTPEVIRLLRQRDQHKEALAAGCDKAYATFLAEISASYQSFRDSVQSLATLDCLISLATIANQPGYVKPEYTNHTCIQVDQGRHPMVEQLLLDSYVPNDIDLDSDKTRALLVTGPNMGGKSSYVRQVALIAIMGQIGSYVPARSAKLGMLDAVFTRMGAFDNMLAGESTFMVELSETADILKQATPRSLVILDELGRGTSTHDGVAIAQAVLDYMIRSIRSLTLFITHYQHLSSMVHSFPDHELRNVHMRFTESGPTEEEITFLYEVREGVAHRSYGLNVARLANLPAPLIELAKQKSAELEQKIHRRRLAGLVRTVGDILADSAKADESLIERLISSAEQL</sequence>
<keyword id="KW-0067">ATP-binding</keyword>
<keyword id="KW-0227">DNA damage</keyword>
<keyword id="KW-0234">DNA repair</keyword>
<keyword id="KW-0238">DNA-binding</keyword>
<keyword id="KW-0547">Nucleotide-binding</keyword>
<keyword id="KW-0539">Nucleus</keyword>
<keyword id="KW-1185">Reference proteome</keyword>
<comment type="function">
    <text evidence="1">Component of the post-replicative DNA mismatch repair system (MMR). Heterodimerizes with msh2 to form MutS beta, which binds to DNA mismatches thereby initiating DNA repair. Msh3 provides substrate-binding and substrate specificity to the complex. When bound, the MutS beta heterodimer bends the DNA helix and shields approximately 20 base pairs. Acts mainly to repair insertion-deletion loops (IDLs) from 2 to 13 nucleotides in size, but can also repair base-base and single insertion-deletion mismatches that occur during replication. After mismatch binding, forms a ternary complex with the MutL alpha heterodimer, which is thought to be responsible for directing the downstream MMR events, including strand discrimination, excision, and resynthesis. ATP binding and hydrolysis play a pivotal role in mismatch repair functions (By similarity).</text>
</comment>
<comment type="subunit">
    <text evidence="1">Heterodimer consisting of msh2-msh3 (MutS beta). Forms a ternary complex with MutL alpha (mlh1-pms1) (By similarity).</text>
</comment>
<comment type="subcellular location">
    <subcellularLocation>
        <location evidence="1">Nucleus</location>
    </subcellularLocation>
</comment>
<comment type="similarity">
    <text evidence="4">Belongs to the DNA mismatch repair MutS family. MSH3 subfamily.</text>
</comment>
<dbReference type="EMBL" id="BA000049">
    <property type="protein sequence ID" value="BAE55245.1"/>
    <property type="molecule type" value="Genomic_DNA"/>
</dbReference>
<dbReference type="RefSeq" id="XP_001817247.1">
    <property type="nucleotide sequence ID" value="XM_001817195.1"/>
</dbReference>
<dbReference type="SMR" id="Q2UT70"/>
<dbReference type="STRING" id="510516.Q2UT70"/>
<dbReference type="EnsemblFungi" id="BAE55245">
    <property type="protein sequence ID" value="BAE55245"/>
    <property type="gene ID" value="AO090005000134"/>
</dbReference>
<dbReference type="GeneID" id="5989192"/>
<dbReference type="KEGG" id="aor:AO090005000134"/>
<dbReference type="VEuPathDB" id="FungiDB:AO090005000134"/>
<dbReference type="HOGENOM" id="CLU_002472_0_0_1"/>
<dbReference type="OMA" id="INMHAAR"/>
<dbReference type="OrthoDB" id="88653at5052"/>
<dbReference type="Proteomes" id="UP000006564">
    <property type="component" value="Chromosome 1"/>
</dbReference>
<dbReference type="GO" id="GO:0005634">
    <property type="term" value="C:nucleus"/>
    <property type="evidence" value="ECO:0007669"/>
    <property type="project" value="UniProtKB-SubCell"/>
</dbReference>
<dbReference type="GO" id="GO:0005524">
    <property type="term" value="F:ATP binding"/>
    <property type="evidence" value="ECO:0007669"/>
    <property type="project" value="UniProtKB-KW"/>
</dbReference>
<dbReference type="GO" id="GO:0140664">
    <property type="term" value="F:ATP-dependent DNA damage sensor activity"/>
    <property type="evidence" value="ECO:0007669"/>
    <property type="project" value="InterPro"/>
</dbReference>
<dbReference type="GO" id="GO:0030983">
    <property type="term" value="F:mismatched DNA binding"/>
    <property type="evidence" value="ECO:0007669"/>
    <property type="project" value="InterPro"/>
</dbReference>
<dbReference type="GO" id="GO:0006298">
    <property type="term" value="P:mismatch repair"/>
    <property type="evidence" value="ECO:0007669"/>
    <property type="project" value="InterPro"/>
</dbReference>
<dbReference type="GO" id="GO:0006312">
    <property type="term" value="P:mitotic recombination"/>
    <property type="evidence" value="ECO:0007669"/>
    <property type="project" value="TreeGrafter"/>
</dbReference>
<dbReference type="FunFam" id="3.30.420.110:FF:000008">
    <property type="entry name" value="DNA mismatch repair protein"/>
    <property type="match status" value="1"/>
</dbReference>
<dbReference type="FunFam" id="3.40.1170.10:FF:000006">
    <property type="entry name" value="DNA mismatch repair protein"/>
    <property type="match status" value="1"/>
</dbReference>
<dbReference type="FunFam" id="1.10.1420.10:FF:000004">
    <property type="entry name" value="DNA mismatch repair protein Msh3"/>
    <property type="match status" value="1"/>
</dbReference>
<dbReference type="FunFam" id="3.40.50.300:FF:001909">
    <property type="entry name" value="DNA mismatch repair protein msh3"/>
    <property type="match status" value="1"/>
</dbReference>
<dbReference type="Gene3D" id="1.10.1420.10">
    <property type="match status" value="2"/>
</dbReference>
<dbReference type="Gene3D" id="3.40.1170.10">
    <property type="entry name" value="DNA repair protein MutS, domain I"/>
    <property type="match status" value="1"/>
</dbReference>
<dbReference type="Gene3D" id="3.30.420.110">
    <property type="entry name" value="MutS, connector domain"/>
    <property type="match status" value="1"/>
</dbReference>
<dbReference type="Gene3D" id="3.40.50.300">
    <property type="entry name" value="P-loop containing nucleotide triphosphate hydrolases"/>
    <property type="match status" value="1"/>
</dbReference>
<dbReference type="InterPro" id="IPR007695">
    <property type="entry name" value="DNA_mismatch_repair_MutS-lik_N"/>
</dbReference>
<dbReference type="InterPro" id="IPR017261">
    <property type="entry name" value="DNA_mismatch_repair_MutS/MSH"/>
</dbReference>
<dbReference type="InterPro" id="IPR000432">
    <property type="entry name" value="DNA_mismatch_repair_MutS_C"/>
</dbReference>
<dbReference type="InterPro" id="IPR007696">
    <property type="entry name" value="DNA_mismatch_repair_MutS_core"/>
</dbReference>
<dbReference type="InterPro" id="IPR016151">
    <property type="entry name" value="DNA_mismatch_repair_MutS_N"/>
</dbReference>
<dbReference type="InterPro" id="IPR036187">
    <property type="entry name" value="DNA_mismatch_repair_MutS_sf"/>
</dbReference>
<dbReference type="InterPro" id="IPR007860">
    <property type="entry name" value="DNA_mmatch_repair_MutS_con_dom"/>
</dbReference>
<dbReference type="InterPro" id="IPR045076">
    <property type="entry name" value="MutS"/>
</dbReference>
<dbReference type="InterPro" id="IPR036678">
    <property type="entry name" value="MutS_con_dom_sf"/>
</dbReference>
<dbReference type="InterPro" id="IPR027417">
    <property type="entry name" value="P-loop_NTPase"/>
</dbReference>
<dbReference type="NCBIfam" id="NF003810">
    <property type="entry name" value="PRK05399.1"/>
    <property type="match status" value="1"/>
</dbReference>
<dbReference type="PANTHER" id="PTHR11361:SF122">
    <property type="entry name" value="DNA MISMATCH REPAIR PROTEIN MSH3"/>
    <property type="match status" value="1"/>
</dbReference>
<dbReference type="PANTHER" id="PTHR11361">
    <property type="entry name" value="DNA MISMATCH REPAIR PROTEIN MUTS FAMILY MEMBER"/>
    <property type="match status" value="1"/>
</dbReference>
<dbReference type="Pfam" id="PF01624">
    <property type="entry name" value="MutS_I"/>
    <property type="match status" value="1"/>
</dbReference>
<dbReference type="Pfam" id="PF05188">
    <property type="entry name" value="MutS_II"/>
    <property type="match status" value="1"/>
</dbReference>
<dbReference type="Pfam" id="PF05192">
    <property type="entry name" value="MutS_III"/>
    <property type="match status" value="1"/>
</dbReference>
<dbReference type="Pfam" id="PF00488">
    <property type="entry name" value="MutS_V"/>
    <property type="match status" value="1"/>
</dbReference>
<dbReference type="PIRSF" id="PIRSF037677">
    <property type="entry name" value="DNA_mis_repair_Msh6"/>
    <property type="match status" value="1"/>
</dbReference>
<dbReference type="SMART" id="SM00534">
    <property type="entry name" value="MUTSac"/>
    <property type="match status" value="1"/>
</dbReference>
<dbReference type="SMART" id="SM00533">
    <property type="entry name" value="MUTSd"/>
    <property type="match status" value="1"/>
</dbReference>
<dbReference type="SUPFAM" id="SSF55271">
    <property type="entry name" value="DNA repair protein MutS, domain I"/>
    <property type="match status" value="1"/>
</dbReference>
<dbReference type="SUPFAM" id="SSF48334">
    <property type="entry name" value="DNA repair protein MutS, domain III"/>
    <property type="match status" value="1"/>
</dbReference>
<dbReference type="SUPFAM" id="SSF52540">
    <property type="entry name" value="P-loop containing nucleoside triphosphate hydrolases"/>
    <property type="match status" value="1"/>
</dbReference>
<dbReference type="PROSITE" id="PS00486">
    <property type="entry name" value="DNA_MISMATCH_REPAIR_2"/>
    <property type="match status" value="1"/>
</dbReference>
<gene>
    <name type="primary">msh3</name>
    <name type="ORF">AO090005000134</name>
</gene>
<feature type="chain" id="PRO_0000338512" description="DNA mismatch repair protein msh3">
    <location>
        <begin position="1"/>
        <end position="1111"/>
    </location>
</feature>
<feature type="region of interest" description="Disordered" evidence="3">
    <location>
        <begin position="1"/>
        <end position="141"/>
    </location>
</feature>
<feature type="region of interest" description="Disordered" evidence="3">
    <location>
        <begin position="155"/>
        <end position="197"/>
    </location>
</feature>
<feature type="region of interest" description="Mispair-binding domain" evidence="1">
    <location>
        <begin position="192"/>
        <end position="319"/>
    </location>
</feature>
<feature type="compositionally biased region" description="Polar residues" evidence="3">
    <location>
        <begin position="1"/>
        <end position="36"/>
    </location>
</feature>
<feature type="compositionally biased region" description="Basic and acidic residues" evidence="3">
    <location>
        <begin position="50"/>
        <end position="59"/>
    </location>
</feature>
<feature type="compositionally biased region" description="Polar residues" evidence="3">
    <location>
        <begin position="86"/>
        <end position="96"/>
    </location>
</feature>
<feature type="compositionally biased region" description="Basic and acidic residues" evidence="3">
    <location>
        <begin position="97"/>
        <end position="107"/>
    </location>
</feature>
<feature type="compositionally biased region" description="Polar residues" evidence="3">
    <location>
        <begin position="110"/>
        <end position="125"/>
    </location>
</feature>
<feature type="compositionally biased region" description="Basic and acidic residues" evidence="3">
    <location>
        <begin position="128"/>
        <end position="141"/>
    </location>
</feature>
<feature type="compositionally biased region" description="Acidic residues" evidence="3">
    <location>
        <begin position="166"/>
        <end position="179"/>
    </location>
</feature>
<feature type="binding site" evidence="2">
    <location>
        <begin position="883"/>
        <end position="890"/>
    </location>
    <ligand>
        <name>ATP</name>
        <dbReference type="ChEBI" id="CHEBI:30616"/>
    </ligand>
</feature>
<name>MSH3_ASPOR</name>
<accession>Q2UT70</accession>
<proteinExistence type="inferred from homology"/>